<evidence type="ECO:0000255" key="1">
    <source>
        <dbReference type="HAMAP-Rule" id="MF_00133"/>
    </source>
</evidence>
<feature type="chain" id="PRO_1000095806" description="Tryptophan synthase beta chain">
    <location>
        <begin position="1"/>
        <end position="406"/>
    </location>
</feature>
<feature type="modified residue" description="N6-(pyridoxal phosphate)lysine" evidence="1">
    <location>
        <position position="99"/>
    </location>
</feature>
<name>TRPB_RHIE6</name>
<dbReference type="EC" id="4.2.1.20" evidence="1"/>
<dbReference type="EMBL" id="CP001074">
    <property type="protein sequence ID" value="ACE89025.1"/>
    <property type="molecule type" value="Genomic_DNA"/>
</dbReference>
<dbReference type="SMR" id="B3PVV2"/>
<dbReference type="KEGG" id="rec:RHECIAT_CH0000022"/>
<dbReference type="eggNOG" id="COG0133">
    <property type="taxonomic scope" value="Bacteria"/>
</dbReference>
<dbReference type="HOGENOM" id="CLU_016734_3_1_5"/>
<dbReference type="UniPathway" id="UPA00035">
    <property type="reaction ID" value="UER00044"/>
</dbReference>
<dbReference type="Proteomes" id="UP000008817">
    <property type="component" value="Chromosome"/>
</dbReference>
<dbReference type="GO" id="GO:0005737">
    <property type="term" value="C:cytoplasm"/>
    <property type="evidence" value="ECO:0007669"/>
    <property type="project" value="TreeGrafter"/>
</dbReference>
<dbReference type="GO" id="GO:0004834">
    <property type="term" value="F:tryptophan synthase activity"/>
    <property type="evidence" value="ECO:0007669"/>
    <property type="project" value="UniProtKB-UniRule"/>
</dbReference>
<dbReference type="CDD" id="cd06446">
    <property type="entry name" value="Trp-synth_B"/>
    <property type="match status" value="1"/>
</dbReference>
<dbReference type="FunFam" id="3.40.50.1100:FF:000001">
    <property type="entry name" value="Tryptophan synthase beta chain"/>
    <property type="match status" value="1"/>
</dbReference>
<dbReference type="FunFam" id="3.40.50.1100:FF:000004">
    <property type="entry name" value="Tryptophan synthase beta chain"/>
    <property type="match status" value="1"/>
</dbReference>
<dbReference type="Gene3D" id="3.40.50.1100">
    <property type="match status" value="2"/>
</dbReference>
<dbReference type="HAMAP" id="MF_00133">
    <property type="entry name" value="Trp_synth_beta"/>
    <property type="match status" value="1"/>
</dbReference>
<dbReference type="InterPro" id="IPR006653">
    <property type="entry name" value="Trp_synth_b_CS"/>
</dbReference>
<dbReference type="InterPro" id="IPR006654">
    <property type="entry name" value="Trp_synth_beta"/>
</dbReference>
<dbReference type="InterPro" id="IPR023026">
    <property type="entry name" value="Trp_synth_beta/beta-like"/>
</dbReference>
<dbReference type="InterPro" id="IPR001926">
    <property type="entry name" value="TrpB-like_PALP"/>
</dbReference>
<dbReference type="InterPro" id="IPR036052">
    <property type="entry name" value="TrpB-like_PALP_sf"/>
</dbReference>
<dbReference type="NCBIfam" id="TIGR00263">
    <property type="entry name" value="trpB"/>
    <property type="match status" value="1"/>
</dbReference>
<dbReference type="PANTHER" id="PTHR48077:SF3">
    <property type="entry name" value="TRYPTOPHAN SYNTHASE"/>
    <property type="match status" value="1"/>
</dbReference>
<dbReference type="PANTHER" id="PTHR48077">
    <property type="entry name" value="TRYPTOPHAN SYNTHASE-RELATED"/>
    <property type="match status" value="1"/>
</dbReference>
<dbReference type="Pfam" id="PF00291">
    <property type="entry name" value="PALP"/>
    <property type="match status" value="1"/>
</dbReference>
<dbReference type="PIRSF" id="PIRSF001413">
    <property type="entry name" value="Trp_syn_beta"/>
    <property type="match status" value="1"/>
</dbReference>
<dbReference type="SUPFAM" id="SSF53686">
    <property type="entry name" value="Tryptophan synthase beta subunit-like PLP-dependent enzymes"/>
    <property type="match status" value="1"/>
</dbReference>
<dbReference type="PROSITE" id="PS00168">
    <property type="entry name" value="TRP_SYNTHASE_BETA"/>
    <property type="match status" value="1"/>
</dbReference>
<gene>
    <name evidence="1" type="primary">trpB</name>
    <name type="ordered locus">RHECIAT_CH0000022</name>
</gene>
<organism>
    <name type="scientific">Rhizobium etli (strain CIAT 652)</name>
    <dbReference type="NCBI Taxonomy" id="491916"/>
    <lineage>
        <taxon>Bacteria</taxon>
        <taxon>Pseudomonadati</taxon>
        <taxon>Pseudomonadota</taxon>
        <taxon>Alphaproteobacteria</taxon>
        <taxon>Hyphomicrobiales</taxon>
        <taxon>Rhizobiaceae</taxon>
        <taxon>Rhizobium/Agrobacterium group</taxon>
        <taxon>Rhizobium</taxon>
    </lineage>
</organism>
<sequence length="406" mass="43565">MNETPKPNSFRSGPDEDGRFGIYGGRFVAETLMPLILDLQDEWNKAKTDPAFQAELQHLGAHYIGRPSPLYFAERLTAELGGAKIYFKREELNHTGSHKINNCIGQILLAKRMGKTRIIAETGAGQHGVASATVAARFGLPCVVYMGATDVERQAPNVFRMKLLGAEVKPVTAGSGTLKDAMNEALRDWVTNVEDTYYLIGTAAGPHPYPEMVRDFQSVIGAEAKEQMLAAEGRLPDLVVAAVGGGSNAIGIFHPFLDDPSVKIVGVEAGGKGLQGDEHCASITAGSPGVLHGNRTYLLQDGDGQIKEGHSISAGLDYPGIGPEHSWLSDIGRVDYVPIMDHEALEAFQTLTRLEGIIPALEAAHAIAEVIKRAPTMSKDEIILMNLSGRGDKDIFTVGKILGMGL</sequence>
<protein>
    <recommendedName>
        <fullName evidence="1">Tryptophan synthase beta chain</fullName>
        <ecNumber evidence="1">4.2.1.20</ecNumber>
    </recommendedName>
</protein>
<accession>B3PVV2</accession>
<comment type="function">
    <text evidence="1">The beta subunit is responsible for the synthesis of L-tryptophan from indole and L-serine.</text>
</comment>
<comment type="catalytic activity">
    <reaction evidence="1">
        <text>(1S,2R)-1-C-(indol-3-yl)glycerol 3-phosphate + L-serine = D-glyceraldehyde 3-phosphate + L-tryptophan + H2O</text>
        <dbReference type="Rhea" id="RHEA:10532"/>
        <dbReference type="ChEBI" id="CHEBI:15377"/>
        <dbReference type="ChEBI" id="CHEBI:33384"/>
        <dbReference type="ChEBI" id="CHEBI:57912"/>
        <dbReference type="ChEBI" id="CHEBI:58866"/>
        <dbReference type="ChEBI" id="CHEBI:59776"/>
        <dbReference type="EC" id="4.2.1.20"/>
    </reaction>
</comment>
<comment type="cofactor">
    <cofactor evidence="1">
        <name>pyridoxal 5'-phosphate</name>
        <dbReference type="ChEBI" id="CHEBI:597326"/>
    </cofactor>
</comment>
<comment type="pathway">
    <text evidence="1">Amino-acid biosynthesis; L-tryptophan biosynthesis; L-tryptophan from chorismate: step 5/5.</text>
</comment>
<comment type="subunit">
    <text evidence="1">Tetramer of two alpha and two beta chains.</text>
</comment>
<comment type="similarity">
    <text evidence="1">Belongs to the TrpB family.</text>
</comment>
<proteinExistence type="inferred from homology"/>
<reference key="1">
    <citation type="journal article" date="2010" name="Appl. Environ. Microbiol.">
        <title>Conserved symbiotic plasmid DNA sequences in the multireplicon pangenomic structure of Rhizobium etli.</title>
        <authorList>
            <person name="Gonzalez V."/>
            <person name="Acosta J.L."/>
            <person name="Santamaria R.I."/>
            <person name="Bustos P."/>
            <person name="Fernandez J.L."/>
            <person name="Hernandez Gonzalez I.L."/>
            <person name="Diaz R."/>
            <person name="Flores M."/>
            <person name="Palacios R."/>
            <person name="Mora J."/>
            <person name="Davila G."/>
        </authorList>
    </citation>
    <scope>NUCLEOTIDE SEQUENCE [LARGE SCALE GENOMIC DNA]</scope>
    <source>
        <strain>CIAT 652</strain>
    </source>
</reference>
<keyword id="KW-0028">Amino-acid biosynthesis</keyword>
<keyword id="KW-0057">Aromatic amino acid biosynthesis</keyword>
<keyword id="KW-0456">Lyase</keyword>
<keyword id="KW-0663">Pyridoxal phosphate</keyword>
<keyword id="KW-0822">Tryptophan biosynthesis</keyword>